<organism>
    <name type="scientific">Danio rerio</name>
    <name type="common">Zebrafish</name>
    <name type="synonym">Brachydanio rerio</name>
    <dbReference type="NCBI Taxonomy" id="7955"/>
    <lineage>
        <taxon>Eukaryota</taxon>
        <taxon>Metazoa</taxon>
        <taxon>Chordata</taxon>
        <taxon>Craniata</taxon>
        <taxon>Vertebrata</taxon>
        <taxon>Euteleostomi</taxon>
        <taxon>Actinopterygii</taxon>
        <taxon>Neopterygii</taxon>
        <taxon>Teleostei</taxon>
        <taxon>Ostariophysi</taxon>
        <taxon>Cypriniformes</taxon>
        <taxon>Danionidae</taxon>
        <taxon>Danioninae</taxon>
        <taxon>Danio</taxon>
    </lineage>
</organism>
<proteinExistence type="evidence at transcript level"/>
<comment type="function">
    <text evidence="1">May be implicated in the regulation of the transcription as a repressor of the transcriptional activity of E4TF1.</text>
</comment>
<comment type="subcellular location">
    <subcellularLocation>
        <location evidence="1">Nucleus</location>
    </subcellularLocation>
    <subcellularLocation>
        <location evidence="1">Cytoplasm</location>
    </subcellularLocation>
    <text evidence="1">Primarily found in the nucleus.</text>
</comment>
<sequence>MGDKKSPTRPKRQAKPTADNGFWDCSVCTFRNSAEAFKCSICDVRKGTSTRKPRINSQLVAQQVAQQYATPPPPKKEKKEKPERPEKDRAEEERPDINPPDEHPVEQRDKDKSEKEQPEKEKKDREKEIIPAITKKPNSKKNRPKSDIHQSPPSERNSIQSGKSTTKTKNSHNSRPKLKNIDRSTAQQLAITVGNVTVIITDFKEKTRTSSTSSSTVTSSASSEQQHQSSGSESMDKGSSRASTPKGDLSLGHDESF</sequence>
<name>RYBPB_DANRE</name>
<accession>Q5EG55</accession>
<accession>A0JMJ2</accession>
<dbReference type="EMBL" id="AY885249">
    <property type="protein sequence ID" value="AAW79577.1"/>
    <property type="molecule type" value="mRNA"/>
</dbReference>
<dbReference type="EMBL" id="BC125899">
    <property type="protein sequence ID" value="AAI25900.1"/>
    <property type="molecule type" value="mRNA"/>
</dbReference>
<dbReference type="RefSeq" id="NP_001012373.1">
    <property type="nucleotide sequence ID" value="NM_001012373.2"/>
</dbReference>
<dbReference type="SMR" id="Q5EG55"/>
<dbReference type="FunCoup" id="Q5EG55">
    <property type="interactions" value="1948"/>
</dbReference>
<dbReference type="STRING" id="7955.ENSDARP00000069979"/>
<dbReference type="PaxDb" id="7955-ENSDARP00000069979"/>
<dbReference type="GeneID" id="497613"/>
<dbReference type="KEGG" id="dre:497613"/>
<dbReference type="AGR" id="ZFIN:ZDB-GENE-061103-96"/>
<dbReference type="CTD" id="497613"/>
<dbReference type="ZFIN" id="ZDB-GENE-061103-96">
    <property type="gene designation" value="rybpb"/>
</dbReference>
<dbReference type="eggNOG" id="KOG4477">
    <property type="taxonomic scope" value="Eukaryota"/>
</dbReference>
<dbReference type="InParanoid" id="Q5EG55"/>
<dbReference type="OrthoDB" id="10063208at2759"/>
<dbReference type="PhylomeDB" id="Q5EG55"/>
<dbReference type="PRO" id="PR:Q5EG55"/>
<dbReference type="Proteomes" id="UP000000437">
    <property type="component" value="Chromosome 6"/>
</dbReference>
<dbReference type="GO" id="GO:0005737">
    <property type="term" value="C:cytoplasm"/>
    <property type="evidence" value="ECO:0007669"/>
    <property type="project" value="UniProtKB-SubCell"/>
</dbReference>
<dbReference type="GO" id="GO:0005634">
    <property type="term" value="C:nucleus"/>
    <property type="evidence" value="ECO:0000318"/>
    <property type="project" value="GO_Central"/>
</dbReference>
<dbReference type="GO" id="GO:0003677">
    <property type="term" value="F:DNA binding"/>
    <property type="evidence" value="ECO:0000318"/>
    <property type="project" value="GO_Central"/>
</dbReference>
<dbReference type="GO" id="GO:0003712">
    <property type="term" value="F:transcription coregulator activity"/>
    <property type="evidence" value="ECO:0000318"/>
    <property type="project" value="GO_Central"/>
</dbReference>
<dbReference type="GO" id="GO:0008270">
    <property type="term" value="F:zinc ion binding"/>
    <property type="evidence" value="ECO:0007669"/>
    <property type="project" value="UniProtKB-KW"/>
</dbReference>
<dbReference type="GO" id="GO:0006915">
    <property type="term" value="P:apoptotic process"/>
    <property type="evidence" value="ECO:0007669"/>
    <property type="project" value="UniProtKB-KW"/>
</dbReference>
<dbReference type="GO" id="GO:0045893">
    <property type="term" value="P:positive regulation of DNA-templated transcription"/>
    <property type="evidence" value="ECO:0007669"/>
    <property type="project" value="InterPro"/>
</dbReference>
<dbReference type="GO" id="GO:0006355">
    <property type="term" value="P:regulation of DNA-templated transcription"/>
    <property type="evidence" value="ECO:0000318"/>
    <property type="project" value="GO_Central"/>
</dbReference>
<dbReference type="FunFam" id="4.10.1060.10:FF:000009">
    <property type="entry name" value="YY1 associated factor 2"/>
    <property type="match status" value="1"/>
</dbReference>
<dbReference type="Gene3D" id="4.10.1060.10">
    <property type="entry name" value="Zinc finger, RanBP2-type"/>
    <property type="match status" value="1"/>
</dbReference>
<dbReference type="InterPro" id="IPR039958">
    <property type="entry name" value="RYBP/YAF2"/>
</dbReference>
<dbReference type="InterPro" id="IPR033774">
    <property type="entry name" value="YAF2_RYBP"/>
</dbReference>
<dbReference type="InterPro" id="IPR001876">
    <property type="entry name" value="Znf_RanBP2"/>
</dbReference>
<dbReference type="InterPro" id="IPR036443">
    <property type="entry name" value="Znf_RanBP2_sf"/>
</dbReference>
<dbReference type="PANTHER" id="PTHR12920:SF3">
    <property type="entry name" value="RING1 AND YY1-BINDING PROTEIN"/>
    <property type="match status" value="1"/>
</dbReference>
<dbReference type="PANTHER" id="PTHR12920">
    <property type="entry name" value="RYBP AND YAF2-RELATED"/>
    <property type="match status" value="1"/>
</dbReference>
<dbReference type="Pfam" id="PF17219">
    <property type="entry name" value="YAF2_RYBP"/>
    <property type="match status" value="1"/>
</dbReference>
<dbReference type="Pfam" id="PF00641">
    <property type="entry name" value="Zn_ribbon_RanBP"/>
    <property type="match status" value="1"/>
</dbReference>
<dbReference type="SMART" id="SM00547">
    <property type="entry name" value="ZnF_RBZ"/>
    <property type="match status" value="1"/>
</dbReference>
<dbReference type="SUPFAM" id="SSF90209">
    <property type="entry name" value="Ran binding protein zinc finger-like"/>
    <property type="match status" value="1"/>
</dbReference>
<dbReference type="PROSITE" id="PS01358">
    <property type="entry name" value="ZF_RANBP2_1"/>
    <property type="match status" value="1"/>
</dbReference>
<dbReference type="PROSITE" id="PS50199">
    <property type="entry name" value="ZF_RANBP2_2"/>
    <property type="match status" value="1"/>
</dbReference>
<feature type="chain" id="PRO_0000097549" description="RING1 and YY1-binding protein B">
    <location>
        <begin position="1"/>
        <end position="257"/>
    </location>
</feature>
<feature type="zinc finger region" description="RanBP2-type" evidence="2">
    <location>
        <begin position="19"/>
        <end position="48"/>
    </location>
</feature>
<feature type="region of interest" description="Disordered" evidence="3">
    <location>
        <begin position="1"/>
        <end position="24"/>
    </location>
</feature>
<feature type="region of interest" description="Disordered" evidence="3">
    <location>
        <begin position="45"/>
        <end position="257"/>
    </location>
</feature>
<feature type="compositionally biased region" description="Basic and acidic residues" evidence="3">
    <location>
        <begin position="74"/>
        <end position="129"/>
    </location>
</feature>
<feature type="compositionally biased region" description="Polar residues" evidence="3">
    <location>
        <begin position="149"/>
        <end position="168"/>
    </location>
</feature>
<feature type="compositionally biased region" description="Basic residues" evidence="3">
    <location>
        <begin position="169"/>
        <end position="178"/>
    </location>
</feature>
<feature type="compositionally biased region" description="Low complexity" evidence="3">
    <location>
        <begin position="209"/>
        <end position="233"/>
    </location>
</feature>
<reference key="1">
    <citation type="submission" date="2005-01" db="EMBL/GenBank/DDBJ databases">
        <title>Zebrafish novel protein similar to human death effector domain-associated factor.</title>
        <authorList>
            <person name="Cheng C.-M."/>
            <person name="Yuo C.-Y."/>
        </authorList>
    </citation>
    <scope>NUCLEOTIDE SEQUENCE [MRNA]</scope>
</reference>
<reference key="2">
    <citation type="submission" date="2006-10" db="EMBL/GenBank/DDBJ databases">
        <authorList>
            <consortium name="NIH - Zebrafish Gene Collection (ZGC) project"/>
        </authorList>
    </citation>
    <scope>NUCLEOTIDE SEQUENCE [LARGE SCALE MRNA]</scope>
    <source>
        <strain>WIK</strain>
        <tissue>Ovary</tissue>
    </source>
</reference>
<protein>
    <recommendedName>
        <fullName>RING1 and YY1-binding protein B</fullName>
    </recommendedName>
    <alternativeName>
        <fullName>Death effector domain-associated factor B</fullName>
        <shortName>DED-associated factor B</shortName>
    </alternativeName>
</protein>
<gene>
    <name type="primary">rybpb</name>
    <name type="synonym">dedaf</name>
    <name type="ORF">zgc:153842</name>
</gene>
<evidence type="ECO:0000250" key="1"/>
<evidence type="ECO:0000255" key="2">
    <source>
        <dbReference type="PROSITE-ProRule" id="PRU00322"/>
    </source>
</evidence>
<evidence type="ECO:0000256" key="3">
    <source>
        <dbReference type="SAM" id="MobiDB-lite"/>
    </source>
</evidence>
<keyword id="KW-0053">Apoptosis</keyword>
<keyword id="KW-0963">Cytoplasm</keyword>
<keyword id="KW-0238">DNA-binding</keyword>
<keyword id="KW-0479">Metal-binding</keyword>
<keyword id="KW-0539">Nucleus</keyword>
<keyword id="KW-1185">Reference proteome</keyword>
<keyword id="KW-0678">Repressor</keyword>
<keyword id="KW-0804">Transcription</keyword>
<keyword id="KW-0805">Transcription regulation</keyword>
<keyword id="KW-0862">Zinc</keyword>
<keyword id="KW-0863">Zinc-finger</keyword>